<accession>B6JB87</accession>
<accession>F8BUL6</accession>
<gene>
    <name evidence="1" type="primary">leuA</name>
    <name type="ordered locus">OCAR_5296</name>
    <name type="ordered locus">OCA5_c26790</name>
</gene>
<sequence length="519" mass="56157">MTSPSTSDKDRVVIFDTTLRDGEQCPGATMTHEEKLEVAEMLDTMGVDIIEAGFPIASVGDFEAVAEIAKRANNAVIAGLARAIPADIVRAGEAVRHAKRGRIHTFVSTSPIHLAHQMRKSEEDVLGIITATVAQARNLVDDVEWSAMDSTRTPIDYLCRCVETAIAAGATTINLPDTVGYAVPEEYRRMFKVIRERVPNADKAVFSVHCHDDLGLAVANSLAGVEGGARQIECTINGIGERAGNAALEEVVMAIKTRGDVMPYWCNVESTTLTRASKVVSAATSFPVQYNKAIVGRNAFAHESGIHQDGVLKNAQTYEIMTPESVGVKQTSLVMGKHSGRHAFQHKLRELGYELADNQLQDAFVRFKALADRKKDIYDEDIEALVDQELAQTHDRLRLVSLTVIAGTHGPQRATMKVEVDGKVRIDEAEGNGPVDAVFNAVKTLVPHEAKLELYQVHAVTAGTDAQAEVSVRLSQDGRSVTARSSDPDTLVASAKAYLSALNKIISRQQREAPVAAAS</sequence>
<reference key="1">
    <citation type="journal article" date="2008" name="J. Bacteriol.">
        <title>Genome sequence of the chemolithoautotrophic bacterium Oligotropha carboxidovorans OM5T.</title>
        <authorList>
            <person name="Paul D."/>
            <person name="Bridges S."/>
            <person name="Burgess S.C."/>
            <person name="Dandass Y."/>
            <person name="Lawrence M.L."/>
        </authorList>
    </citation>
    <scope>NUCLEOTIDE SEQUENCE [LARGE SCALE GENOMIC DNA]</scope>
    <source>
        <strain>ATCC 49405 / DSM 1227 / KCTC 32145 / OM5</strain>
    </source>
</reference>
<reference key="2">
    <citation type="journal article" date="2011" name="J. Bacteriol.">
        <title>Complete genome sequences of the chemolithoautotrophic Oligotropha carboxidovorans strains OM4 and OM5.</title>
        <authorList>
            <person name="Volland S."/>
            <person name="Rachinger M."/>
            <person name="Strittmatter A."/>
            <person name="Daniel R."/>
            <person name="Gottschalk G."/>
            <person name="Meyer O."/>
        </authorList>
    </citation>
    <scope>NUCLEOTIDE SEQUENCE [LARGE SCALE GENOMIC DNA]</scope>
    <source>
        <strain>ATCC 49405 / DSM 1227 / KCTC 32145 / OM5</strain>
    </source>
</reference>
<name>LEU1_AFIC5</name>
<organism>
    <name type="scientific">Afipia carboxidovorans (strain ATCC 49405 / DSM 1227 / KCTC 32145 / OM5)</name>
    <name type="common">Oligotropha carboxidovorans</name>
    <dbReference type="NCBI Taxonomy" id="504832"/>
    <lineage>
        <taxon>Bacteria</taxon>
        <taxon>Pseudomonadati</taxon>
        <taxon>Pseudomonadota</taxon>
        <taxon>Alphaproteobacteria</taxon>
        <taxon>Hyphomicrobiales</taxon>
        <taxon>Nitrobacteraceae</taxon>
        <taxon>Afipia</taxon>
    </lineage>
</organism>
<feature type="chain" id="PRO_1000149233" description="2-isopropylmalate synthase">
    <location>
        <begin position="1"/>
        <end position="519"/>
    </location>
</feature>
<feature type="domain" description="Pyruvate carboxyltransferase" evidence="1">
    <location>
        <begin position="12"/>
        <end position="274"/>
    </location>
</feature>
<feature type="region of interest" description="Regulatory domain" evidence="1">
    <location>
        <begin position="398"/>
        <end position="519"/>
    </location>
</feature>
<feature type="binding site" evidence="1">
    <location>
        <position position="21"/>
    </location>
    <ligand>
        <name>Mn(2+)</name>
        <dbReference type="ChEBI" id="CHEBI:29035"/>
    </ligand>
</feature>
<feature type="binding site" evidence="1">
    <location>
        <position position="209"/>
    </location>
    <ligand>
        <name>Mn(2+)</name>
        <dbReference type="ChEBI" id="CHEBI:29035"/>
    </ligand>
</feature>
<feature type="binding site" evidence="1">
    <location>
        <position position="211"/>
    </location>
    <ligand>
        <name>Mn(2+)</name>
        <dbReference type="ChEBI" id="CHEBI:29035"/>
    </ligand>
</feature>
<feature type="binding site" evidence="1">
    <location>
        <position position="245"/>
    </location>
    <ligand>
        <name>Mn(2+)</name>
        <dbReference type="ChEBI" id="CHEBI:29035"/>
    </ligand>
</feature>
<protein>
    <recommendedName>
        <fullName evidence="1">2-isopropylmalate synthase</fullName>
        <ecNumber evidence="1">2.3.3.13</ecNumber>
    </recommendedName>
    <alternativeName>
        <fullName evidence="1">Alpha-IPM synthase</fullName>
    </alternativeName>
    <alternativeName>
        <fullName evidence="1">Alpha-isopropylmalate synthase</fullName>
    </alternativeName>
</protein>
<evidence type="ECO:0000255" key="1">
    <source>
        <dbReference type="HAMAP-Rule" id="MF_01025"/>
    </source>
</evidence>
<dbReference type="EC" id="2.3.3.13" evidence="1"/>
<dbReference type="EMBL" id="CP001196">
    <property type="protein sequence ID" value="ACI92428.1"/>
    <property type="molecule type" value="Genomic_DNA"/>
</dbReference>
<dbReference type="EMBL" id="CP002826">
    <property type="protein sequence ID" value="AEI07373.1"/>
    <property type="molecule type" value="Genomic_DNA"/>
</dbReference>
<dbReference type="RefSeq" id="WP_012562457.1">
    <property type="nucleotide sequence ID" value="NC_015684.1"/>
</dbReference>
<dbReference type="SMR" id="B6JB87"/>
<dbReference type="STRING" id="504832.OCA5_c26790"/>
<dbReference type="KEGG" id="oca:OCAR_5296"/>
<dbReference type="KEGG" id="ocg:OCA5_c26790"/>
<dbReference type="PATRIC" id="fig|504832.7.peg.2829"/>
<dbReference type="eggNOG" id="COG0119">
    <property type="taxonomic scope" value="Bacteria"/>
</dbReference>
<dbReference type="HOGENOM" id="CLU_022158_0_1_5"/>
<dbReference type="OrthoDB" id="9803573at2"/>
<dbReference type="UniPathway" id="UPA00048">
    <property type="reaction ID" value="UER00070"/>
</dbReference>
<dbReference type="Proteomes" id="UP000007730">
    <property type="component" value="Chromosome"/>
</dbReference>
<dbReference type="GO" id="GO:0005829">
    <property type="term" value="C:cytosol"/>
    <property type="evidence" value="ECO:0007669"/>
    <property type="project" value="TreeGrafter"/>
</dbReference>
<dbReference type="GO" id="GO:0003852">
    <property type="term" value="F:2-isopropylmalate synthase activity"/>
    <property type="evidence" value="ECO:0007669"/>
    <property type="project" value="UniProtKB-UniRule"/>
</dbReference>
<dbReference type="GO" id="GO:0003985">
    <property type="term" value="F:acetyl-CoA C-acetyltransferase activity"/>
    <property type="evidence" value="ECO:0007669"/>
    <property type="project" value="UniProtKB-UniRule"/>
</dbReference>
<dbReference type="GO" id="GO:0030145">
    <property type="term" value="F:manganese ion binding"/>
    <property type="evidence" value="ECO:0007669"/>
    <property type="project" value="UniProtKB-UniRule"/>
</dbReference>
<dbReference type="GO" id="GO:0009098">
    <property type="term" value="P:L-leucine biosynthetic process"/>
    <property type="evidence" value="ECO:0007669"/>
    <property type="project" value="UniProtKB-UniRule"/>
</dbReference>
<dbReference type="CDD" id="cd07940">
    <property type="entry name" value="DRE_TIM_IPMS"/>
    <property type="match status" value="1"/>
</dbReference>
<dbReference type="FunFam" id="1.10.238.260:FF:000001">
    <property type="entry name" value="2-isopropylmalate synthase"/>
    <property type="match status" value="1"/>
</dbReference>
<dbReference type="FunFam" id="3.20.20.70:FF:000010">
    <property type="entry name" value="2-isopropylmalate synthase"/>
    <property type="match status" value="1"/>
</dbReference>
<dbReference type="FunFam" id="3.30.160.270:FF:000003">
    <property type="entry name" value="2-isopropylmalate synthase"/>
    <property type="match status" value="1"/>
</dbReference>
<dbReference type="Gene3D" id="1.10.238.260">
    <property type="match status" value="1"/>
</dbReference>
<dbReference type="Gene3D" id="3.30.160.270">
    <property type="match status" value="1"/>
</dbReference>
<dbReference type="Gene3D" id="3.20.20.70">
    <property type="entry name" value="Aldolase class I"/>
    <property type="match status" value="1"/>
</dbReference>
<dbReference type="HAMAP" id="MF_01025">
    <property type="entry name" value="LeuA_type1"/>
    <property type="match status" value="1"/>
</dbReference>
<dbReference type="InterPro" id="IPR050073">
    <property type="entry name" value="2-IPM_HCS-like"/>
</dbReference>
<dbReference type="InterPro" id="IPR013709">
    <property type="entry name" value="2-isopropylmalate_synth_dimer"/>
</dbReference>
<dbReference type="InterPro" id="IPR002034">
    <property type="entry name" value="AIPM/Hcit_synth_CS"/>
</dbReference>
<dbReference type="InterPro" id="IPR013785">
    <property type="entry name" value="Aldolase_TIM"/>
</dbReference>
<dbReference type="InterPro" id="IPR054691">
    <property type="entry name" value="LeuA/HCS_post-cat"/>
</dbReference>
<dbReference type="InterPro" id="IPR036230">
    <property type="entry name" value="LeuA_allosteric_dom_sf"/>
</dbReference>
<dbReference type="InterPro" id="IPR005671">
    <property type="entry name" value="LeuA_bact_synth"/>
</dbReference>
<dbReference type="InterPro" id="IPR000891">
    <property type="entry name" value="PYR_CT"/>
</dbReference>
<dbReference type="NCBIfam" id="TIGR00973">
    <property type="entry name" value="leuA_bact"/>
    <property type="match status" value="1"/>
</dbReference>
<dbReference type="NCBIfam" id="NF002086">
    <property type="entry name" value="PRK00915.1-3"/>
    <property type="match status" value="1"/>
</dbReference>
<dbReference type="NCBIfam" id="NF002087">
    <property type="entry name" value="PRK00915.1-4"/>
    <property type="match status" value="1"/>
</dbReference>
<dbReference type="PANTHER" id="PTHR10277:SF9">
    <property type="entry name" value="2-ISOPROPYLMALATE SYNTHASE 1, CHLOROPLASTIC-RELATED"/>
    <property type="match status" value="1"/>
</dbReference>
<dbReference type="PANTHER" id="PTHR10277">
    <property type="entry name" value="HOMOCITRATE SYNTHASE-RELATED"/>
    <property type="match status" value="1"/>
</dbReference>
<dbReference type="Pfam" id="PF22617">
    <property type="entry name" value="HCS_D2"/>
    <property type="match status" value="1"/>
</dbReference>
<dbReference type="Pfam" id="PF00682">
    <property type="entry name" value="HMGL-like"/>
    <property type="match status" value="1"/>
</dbReference>
<dbReference type="Pfam" id="PF08502">
    <property type="entry name" value="LeuA_dimer"/>
    <property type="match status" value="1"/>
</dbReference>
<dbReference type="SMART" id="SM00917">
    <property type="entry name" value="LeuA_dimer"/>
    <property type="match status" value="1"/>
</dbReference>
<dbReference type="SUPFAM" id="SSF110921">
    <property type="entry name" value="2-isopropylmalate synthase LeuA, allosteric (dimerisation) domain"/>
    <property type="match status" value="1"/>
</dbReference>
<dbReference type="SUPFAM" id="SSF51569">
    <property type="entry name" value="Aldolase"/>
    <property type="match status" value="1"/>
</dbReference>
<dbReference type="PROSITE" id="PS00815">
    <property type="entry name" value="AIPM_HOMOCIT_SYNTH_1"/>
    <property type="match status" value="1"/>
</dbReference>
<dbReference type="PROSITE" id="PS00816">
    <property type="entry name" value="AIPM_HOMOCIT_SYNTH_2"/>
    <property type="match status" value="1"/>
</dbReference>
<dbReference type="PROSITE" id="PS50991">
    <property type="entry name" value="PYR_CT"/>
    <property type="match status" value="1"/>
</dbReference>
<comment type="function">
    <text evidence="1">Catalyzes the condensation of the acetyl group of acetyl-CoA with 3-methyl-2-oxobutanoate (2-ketoisovalerate) to form 3-carboxy-3-hydroxy-4-methylpentanoate (2-isopropylmalate).</text>
</comment>
<comment type="catalytic activity">
    <reaction evidence="1">
        <text>3-methyl-2-oxobutanoate + acetyl-CoA + H2O = (2S)-2-isopropylmalate + CoA + H(+)</text>
        <dbReference type="Rhea" id="RHEA:21524"/>
        <dbReference type="ChEBI" id="CHEBI:1178"/>
        <dbReference type="ChEBI" id="CHEBI:11851"/>
        <dbReference type="ChEBI" id="CHEBI:15377"/>
        <dbReference type="ChEBI" id="CHEBI:15378"/>
        <dbReference type="ChEBI" id="CHEBI:57287"/>
        <dbReference type="ChEBI" id="CHEBI:57288"/>
        <dbReference type="EC" id="2.3.3.13"/>
    </reaction>
</comment>
<comment type="cofactor">
    <cofactor evidence="1">
        <name>Mn(2+)</name>
        <dbReference type="ChEBI" id="CHEBI:29035"/>
    </cofactor>
</comment>
<comment type="pathway">
    <text evidence="1">Amino-acid biosynthesis; L-leucine biosynthesis; L-leucine from 3-methyl-2-oxobutanoate: step 1/4.</text>
</comment>
<comment type="subunit">
    <text evidence="1">Homodimer.</text>
</comment>
<comment type="subcellular location">
    <subcellularLocation>
        <location evidence="1">Cytoplasm</location>
    </subcellularLocation>
</comment>
<comment type="similarity">
    <text evidence="1">Belongs to the alpha-IPM synthase/homocitrate synthase family. LeuA type 1 subfamily.</text>
</comment>
<proteinExistence type="inferred from homology"/>
<keyword id="KW-0028">Amino-acid biosynthesis</keyword>
<keyword id="KW-0100">Branched-chain amino acid biosynthesis</keyword>
<keyword id="KW-0963">Cytoplasm</keyword>
<keyword id="KW-0432">Leucine biosynthesis</keyword>
<keyword id="KW-0464">Manganese</keyword>
<keyword id="KW-0479">Metal-binding</keyword>
<keyword id="KW-1185">Reference proteome</keyword>
<keyword id="KW-0808">Transferase</keyword>